<sequence>MSTKIAVLGGGAWGTALAAMAAKGGHESWLYARDAETVVAINKDRRNPRYLGDITLADGIRASTDAAAVVTGADAVLAVIPAQAMRNGLSELGTLIPQASPIVLCAKGIEQNTGRLMSEVVAEILPDHRIAALSGPSFASDVARGLPTAVTVACEDANTADRLAALLSGPAFRCYSTTDLKGVETGGALKNVLAIAAGAAIGRGYGASAQAALVTRGFAELRRIGQAMSARPETIMGLSGLGDLMLTCSSSQSRNYSYGLALGRGEDLTSRPLAEGVATAPIAAELCRKHNISAPIIDAVGALLDGKITIDEAVTALLNRPLKTED</sequence>
<comment type="function">
    <text evidence="1">Catalyzes the reduction of the glycolytic intermediate dihydroxyacetone phosphate (DHAP) to sn-glycerol 3-phosphate (G3P), the key precursor for phospholipid synthesis.</text>
</comment>
<comment type="catalytic activity">
    <reaction evidence="1">
        <text>sn-glycerol 3-phosphate + NAD(+) = dihydroxyacetone phosphate + NADH + H(+)</text>
        <dbReference type="Rhea" id="RHEA:11092"/>
        <dbReference type="ChEBI" id="CHEBI:15378"/>
        <dbReference type="ChEBI" id="CHEBI:57540"/>
        <dbReference type="ChEBI" id="CHEBI:57597"/>
        <dbReference type="ChEBI" id="CHEBI:57642"/>
        <dbReference type="ChEBI" id="CHEBI:57945"/>
        <dbReference type="EC" id="1.1.1.94"/>
    </reaction>
    <physiologicalReaction direction="right-to-left" evidence="1">
        <dbReference type="Rhea" id="RHEA:11094"/>
    </physiologicalReaction>
</comment>
<comment type="catalytic activity">
    <reaction evidence="1">
        <text>sn-glycerol 3-phosphate + NADP(+) = dihydroxyacetone phosphate + NADPH + H(+)</text>
        <dbReference type="Rhea" id="RHEA:11096"/>
        <dbReference type="ChEBI" id="CHEBI:15378"/>
        <dbReference type="ChEBI" id="CHEBI:57597"/>
        <dbReference type="ChEBI" id="CHEBI:57642"/>
        <dbReference type="ChEBI" id="CHEBI:57783"/>
        <dbReference type="ChEBI" id="CHEBI:58349"/>
        <dbReference type="EC" id="1.1.1.94"/>
    </reaction>
    <physiologicalReaction direction="right-to-left" evidence="1">
        <dbReference type="Rhea" id="RHEA:11098"/>
    </physiologicalReaction>
</comment>
<comment type="pathway">
    <text evidence="1">Membrane lipid metabolism; glycerophospholipid metabolism.</text>
</comment>
<comment type="subcellular location">
    <subcellularLocation>
        <location evidence="1">Cytoplasm</location>
    </subcellularLocation>
</comment>
<comment type="similarity">
    <text evidence="1">Belongs to the NAD-dependent glycerol-3-phosphate dehydrogenase family.</text>
</comment>
<organism>
    <name type="scientific">Brucella canis (strain ATCC 23365 / NCTC 10854 / RM-666)</name>
    <dbReference type="NCBI Taxonomy" id="483179"/>
    <lineage>
        <taxon>Bacteria</taxon>
        <taxon>Pseudomonadati</taxon>
        <taxon>Pseudomonadota</taxon>
        <taxon>Alphaproteobacteria</taxon>
        <taxon>Hyphomicrobiales</taxon>
        <taxon>Brucellaceae</taxon>
        <taxon>Brucella/Ochrobactrum group</taxon>
        <taxon>Brucella</taxon>
    </lineage>
</organism>
<name>GPDA_BRUC2</name>
<reference key="1">
    <citation type="submission" date="2007-10" db="EMBL/GenBank/DDBJ databases">
        <title>Brucella canis ATCC 23365 whole genome shotgun sequencing project.</title>
        <authorList>
            <person name="Setubal J.C."/>
            <person name="Bowns C."/>
            <person name="Boyle S."/>
            <person name="Crasta O.R."/>
            <person name="Czar M.J."/>
            <person name="Dharmanolla C."/>
            <person name="Gillespie J.J."/>
            <person name="Kenyon R.W."/>
            <person name="Lu J."/>
            <person name="Mane S."/>
            <person name="Mohapatra S."/>
            <person name="Nagrani S."/>
            <person name="Purkayastha A."/>
            <person name="Rajasimha H.K."/>
            <person name="Shallom J.M."/>
            <person name="Shallom S."/>
            <person name="Shukla M."/>
            <person name="Snyder E.E."/>
            <person name="Sobral B.W."/>
            <person name="Wattam A.R."/>
            <person name="Will R."/>
            <person name="Williams K."/>
            <person name="Yoo H."/>
            <person name="Bruce D."/>
            <person name="Detter C."/>
            <person name="Munk C."/>
            <person name="Brettin T.S."/>
        </authorList>
    </citation>
    <scope>NUCLEOTIDE SEQUENCE [LARGE SCALE GENOMIC DNA]</scope>
    <source>
        <strain>ATCC 23365 / NCTC 10854 / RM-666</strain>
    </source>
</reference>
<proteinExistence type="inferred from homology"/>
<accession>A9M8M4</accession>
<keyword id="KW-0963">Cytoplasm</keyword>
<keyword id="KW-0444">Lipid biosynthesis</keyword>
<keyword id="KW-0443">Lipid metabolism</keyword>
<keyword id="KW-0520">NAD</keyword>
<keyword id="KW-0521">NADP</keyword>
<keyword id="KW-0547">Nucleotide-binding</keyword>
<keyword id="KW-0560">Oxidoreductase</keyword>
<keyword id="KW-0594">Phospholipid biosynthesis</keyword>
<keyword id="KW-1208">Phospholipid metabolism</keyword>
<keyword id="KW-1185">Reference proteome</keyword>
<evidence type="ECO:0000255" key="1">
    <source>
        <dbReference type="HAMAP-Rule" id="MF_00394"/>
    </source>
</evidence>
<gene>
    <name evidence="1" type="primary">gpsA</name>
    <name type="ordered locus">BCAN_A1932</name>
</gene>
<protein>
    <recommendedName>
        <fullName evidence="1">Glycerol-3-phosphate dehydrogenase [NAD(P)+]</fullName>
        <ecNumber evidence="1">1.1.1.94</ecNumber>
    </recommendedName>
    <alternativeName>
        <fullName evidence="1">NAD(P)(+)-dependent glycerol-3-phosphate dehydrogenase</fullName>
    </alternativeName>
    <alternativeName>
        <fullName evidence="1">NAD(P)H-dependent dihydroxyacetone-phosphate reductase</fullName>
    </alternativeName>
</protein>
<dbReference type="EC" id="1.1.1.94" evidence="1"/>
<dbReference type="EMBL" id="CP000872">
    <property type="protein sequence ID" value="ABX62922.1"/>
    <property type="molecule type" value="Genomic_DNA"/>
</dbReference>
<dbReference type="RefSeq" id="WP_002964959.1">
    <property type="nucleotide sequence ID" value="NC_010103.1"/>
</dbReference>
<dbReference type="SMR" id="A9M8M4"/>
<dbReference type="KEGG" id="bcs:BCAN_A1932"/>
<dbReference type="HOGENOM" id="CLU_033449_0_2_5"/>
<dbReference type="PhylomeDB" id="A9M8M4"/>
<dbReference type="UniPathway" id="UPA00940"/>
<dbReference type="Proteomes" id="UP000001385">
    <property type="component" value="Chromosome I"/>
</dbReference>
<dbReference type="GO" id="GO:0005829">
    <property type="term" value="C:cytosol"/>
    <property type="evidence" value="ECO:0007669"/>
    <property type="project" value="TreeGrafter"/>
</dbReference>
<dbReference type="GO" id="GO:0047952">
    <property type="term" value="F:glycerol-3-phosphate dehydrogenase [NAD(P)+] activity"/>
    <property type="evidence" value="ECO:0007669"/>
    <property type="project" value="UniProtKB-UniRule"/>
</dbReference>
<dbReference type="GO" id="GO:0051287">
    <property type="term" value="F:NAD binding"/>
    <property type="evidence" value="ECO:0007669"/>
    <property type="project" value="InterPro"/>
</dbReference>
<dbReference type="GO" id="GO:0005975">
    <property type="term" value="P:carbohydrate metabolic process"/>
    <property type="evidence" value="ECO:0007669"/>
    <property type="project" value="InterPro"/>
</dbReference>
<dbReference type="GO" id="GO:0046167">
    <property type="term" value="P:glycerol-3-phosphate biosynthetic process"/>
    <property type="evidence" value="ECO:0007669"/>
    <property type="project" value="UniProtKB-UniRule"/>
</dbReference>
<dbReference type="GO" id="GO:0046168">
    <property type="term" value="P:glycerol-3-phosphate catabolic process"/>
    <property type="evidence" value="ECO:0007669"/>
    <property type="project" value="InterPro"/>
</dbReference>
<dbReference type="GO" id="GO:0006650">
    <property type="term" value="P:glycerophospholipid metabolic process"/>
    <property type="evidence" value="ECO:0007669"/>
    <property type="project" value="UniProtKB-UniRule"/>
</dbReference>
<dbReference type="GO" id="GO:0008654">
    <property type="term" value="P:phospholipid biosynthetic process"/>
    <property type="evidence" value="ECO:0007669"/>
    <property type="project" value="UniProtKB-KW"/>
</dbReference>
<dbReference type="FunFam" id="3.40.50.720:FF:000019">
    <property type="entry name" value="Glycerol-3-phosphate dehydrogenase [NAD(P)+]"/>
    <property type="match status" value="1"/>
</dbReference>
<dbReference type="Gene3D" id="1.10.1040.10">
    <property type="entry name" value="N-(1-d-carboxylethyl)-l-norvaline Dehydrogenase, domain 2"/>
    <property type="match status" value="1"/>
</dbReference>
<dbReference type="Gene3D" id="3.40.50.720">
    <property type="entry name" value="NAD(P)-binding Rossmann-like Domain"/>
    <property type="match status" value="1"/>
</dbReference>
<dbReference type="HAMAP" id="MF_00394">
    <property type="entry name" value="NAD_Glyc3P_dehydrog"/>
    <property type="match status" value="1"/>
</dbReference>
<dbReference type="InterPro" id="IPR008927">
    <property type="entry name" value="6-PGluconate_DH-like_C_sf"/>
</dbReference>
<dbReference type="InterPro" id="IPR013328">
    <property type="entry name" value="6PGD_dom2"/>
</dbReference>
<dbReference type="InterPro" id="IPR006168">
    <property type="entry name" value="G3P_DH_NAD-dep"/>
</dbReference>
<dbReference type="InterPro" id="IPR006109">
    <property type="entry name" value="G3P_DH_NAD-dep_C"/>
</dbReference>
<dbReference type="InterPro" id="IPR011128">
    <property type="entry name" value="G3P_DH_NAD-dep_N"/>
</dbReference>
<dbReference type="InterPro" id="IPR036291">
    <property type="entry name" value="NAD(P)-bd_dom_sf"/>
</dbReference>
<dbReference type="NCBIfam" id="NF000940">
    <property type="entry name" value="PRK00094.1-2"/>
    <property type="match status" value="1"/>
</dbReference>
<dbReference type="NCBIfam" id="NF000942">
    <property type="entry name" value="PRK00094.1-4"/>
    <property type="match status" value="1"/>
</dbReference>
<dbReference type="PANTHER" id="PTHR11728">
    <property type="entry name" value="GLYCEROL-3-PHOSPHATE DEHYDROGENASE"/>
    <property type="match status" value="1"/>
</dbReference>
<dbReference type="PANTHER" id="PTHR11728:SF1">
    <property type="entry name" value="GLYCEROL-3-PHOSPHATE DEHYDROGENASE [NAD(+)] 2, CHLOROPLASTIC"/>
    <property type="match status" value="1"/>
</dbReference>
<dbReference type="Pfam" id="PF07479">
    <property type="entry name" value="NAD_Gly3P_dh_C"/>
    <property type="match status" value="1"/>
</dbReference>
<dbReference type="Pfam" id="PF01210">
    <property type="entry name" value="NAD_Gly3P_dh_N"/>
    <property type="match status" value="1"/>
</dbReference>
<dbReference type="PIRSF" id="PIRSF000114">
    <property type="entry name" value="Glycerol-3-P_dh"/>
    <property type="match status" value="1"/>
</dbReference>
<dbReference type="PRINTS" id="PR00077">
    <property type="entry name" value="GPDHDRGNASE"/>
</dbReference>
<dbReference type="SUPFAM" id="SSF48179">
    <property type="entry name" value="6-phosphogluconate dehydrogenase C-terminal domain-like"/>
    <property type="match status" value="1"/>
</dbReference>
<dbReference type="SUPFAM" id="SSF51735">
    <property type="entry name" value="NAD(P)-binding Rossmann-fold domains"/>
    <property type="match status" value="1"/>
</dbReference>
<dbReference type="PROSITE" id="PS00957">
    <property type="entry name" value="NAD_G3PDH"/>
    <property type="match status" value="1"/>
</dbReference>
<feature type="chain" id="PRO_1000080300" description="Glycerol-3-phosphate dehydrogenase [NAD(P)+]">
    <location>
        <begin position="1"/>
        <end position="326"/>
    </location>
</feature>
<feature type="active site" description="Proton acceptor" evidence="1">
    <location>
        <position position="190"/>
    </location>
</feature>
<feature type="binding site" evidence="1">
    <location>
        <position position="13"/>
    </location>
    <ligand>
        <name>NADPH</name>
        <dbReference type="ChEBI" id="CHEBI:57783"/>
    </ligand>
</feature>
<feature type="binding site" evidence="1">
    <location>
        <position position="33"/>
    </location>
    <ligand>
        <name>NADPH</name>
        <dbReference type="ChEBI" id="CHEBI:57783"/>
    </ligand>
</feature>
<feature type="binding site" evidence="1">
    <location>
        <position position="107"/>
    </location>
    <ligand>
        <name>NADPH</name>
        <dbReference type="ChEBI" id="CHEBI:57783"/>
    </ligand>
</feature>
<feature type="binding site" evidence="1">
    <location>
        <position position="107"/>
    </location>
    <ligand>
        <name>sn-glycerol 3-phosphate</name>
        <dbReference type="ChEBI" id="CHEBI:57597"/>
    </ligand>
</feature>
<feature type="binding site" evidence="1">
    <location>
        <position position="135"/>
    </location>
    <ligand>
        <name>sn-glycerol 3-phosphate</name>
        <dbReference type="ChEBI" id="CHEBI:57597"/>
    </ligand>
</feature>
<feature type="binding site" evidence="1">
    <location>
        <position position="137"/>
    </location>
    <ligand>
        <name>sn-glycerol 3-phosphate</name>
        <dbReference type="ChEBI" id="CHEBI:57597"/>
    </ligand>
</feature>
<feature type="binding site" evidence="1">
    <location>
        <position position="139"/>
    </location>
    <ligand>
        <name>NADPH</name>
        <dbReference type="ChEBI" id="CHEBI:57783"/>
    </ligand>
</feature>
<feature type="binding site" evidence="1">
    <location>
        <position position="190"/>
    </location>
    <ligand>
        <name>sn-glycerol 3-phosphate</name>
        <dbReference type="ChEBI" id="CHEBI:57597"/>
    </ligand>
</feature>
<feature type="binding site" evidence="1">
    <location>
        <position position="243"/>
    </location>
    <ligand>
        <name>sn-glycerol 3-phosphate</name>
        <dbReference type="ChEBI" id="CHEBI:57597"/>
    </ligand>
</feature>
<feature type="binding site" evidence="1">
    <location>
        <position position="253"/>
    </location>
    <ligand>
        <name>sn-glycerol 3-phosphate</name>
        <dbReference type="ChEBI" id="CHEBI:57597"/>
    </ligand>
</feature>
<feature type="binding site" evidence="1">
    <location>
        <position position="254"/>
    </location>
    <ligand>
        <name>NADPH</name>
        <dbReference type="ChEBI" id="CHEBI:57783"/>
    </ligand>
</feature>
<feature type="binding site" evidence="1">
    <location>
        <position position="254"/>
    </location>
    <ligand>
        <name>sn-glycerol 3-phosphate</name>
        <dbReference type="ChEBI" id="CHEBI:57597"/>
    </ligand>
</feature>
<feature type="binding site" evidence="1">
    <location>
        <position position="255"/>
    </location>
    <ligand>
        <name>sn-glycerol 3-phosphate</name>
        <dbReference type="ChEBI" id="CHEBI:57597"/>
    </ligand>
</feature>
<feature type="binding site" evidence="1">
    <location>
        <position position="273"/>
    </location>
    <ligand>
        <name>NADPH</name>
        <dbReference type="ChEBI" id="CHEBI:57783"/>
    </ligand>
</feature>
<feature type="binding site" evidence="1">
    <location>
        <position position="275"/>
    </location>
    <ligand>
        <name>NADPH</name>
        <dbReference type="ChEBI" id="CHEBI:57783"/>
    </ligand>
</feature>